<sequence>MHTHNNFKTPSDEDELDDLDEDMVVGVIAEIEQEVLNESDSDNDEYDLVDMGAPVPDNDGDISYEGNDSSSSDDSFDPNAADSDSDDSMLDEAGGVTAGGATSAKKRKDDDNPSGSNKQPEATFDLDEDDETDETVRAMIAAIKKPRSSPPEIKLEDFITDICFHPDRDIIALATIIGDVHLYEYDNEANKLLRTIEVHSKACRDVEFTEDGRFLLTCSKDKCVMVTDMETEKLKKLYETAHDDAINTLHVLNENLFASGDDAGTVKLWDLRTKNAIFELKELEDQITQLTTNEQSKLLLATSADGYLTTFNISARKMYVQSEPYEEELNCMGVYRGDSKLVVGTSKGRLYTYNWGQFGYHCDMYPGIKSPISLMIPITDRIACVAGEDGNIRACHIAPYRNLGVVGQHNMPIESLDVNASGELIASSSHNNDVRFWNVKYFEDFGDIKYNEKHNAYKEQRHNLPSSKCSNASDFFSDLTKENADGDDDPGAGPSNMA</sequence>
<dbReference type="EMBL" id="AE014297">
    <property type="protein sequence ID" value="AAF54692.2"/>
    <property type="molecule type" value="Genomic_DNA"/>
</dbReference>
<dbReference type="EMBL" id="AY069480">
    <property type="protein sequence ID" value="AAL39625.1"/>
    <property type="molecule type" value="mRNA"/>
</dbReference>
<dbReference type="RefSeq" id="NP_650111.3">
    <property type="nucleotide sequence ID" value="NM_141854.4"/>
</dbReference>
<dbReference type="SMR" id="Q8T088"/>
<dbReference type="BioGRID" id="66544">
    <property type="interactions" value="1"/>
</dbReference>
<dbReference type="FunCoup" id="Q8T088">
    <property type="interactions" value="750"/>
</dbReference>
<dbReference type="IntAct" id="Q8T088">
    <property type="interactions" value="47"/>
</dbReference>
<dbReference type="STRING" id="7227.FBpp0081907"/>
<dbReference type="PaxDb" id="7227-FBpp0081907"/>
<dbReference type="DNASU" id="41419"/>
<dbReference type="EnsemblMetazoa" id="FBtr0082431">
    <property type="protein sequence ID" value="FBpp0081907"/>
    <property type="gene ID" value="FBgn0037943"/>
</dbReference>
<dbReference type="GeneID" id="41419"/>
<dbReference type="KEGG" id="dme:Dmel_CG14722"/>
<dbReference type="UCSC" id="CG14722-RA">
    <property type="organism name" value="d. melanogaster"/>
</dbReference>
<dbReference type="AGR" id="FB:FBgn0037943"/>
<dbReference type="FlyBase" id="FBgn0037943">
    <property type="gene designation" value="CG14722"/>
</dbReference>
<dbReference type="VEuPathDB" id="VectorBase:FBgn0037943"/>
<dbReference type="eggNOG" id="KOG2444">
    <property type="taxonomic scope" value="Eukaryota"/>
</dbReference>
<dbReference type="GeneTree" id="ENSGT00940000153727"/>
<dbReference type="HOGENOM" id="CLU_035848_1_0_1"/>
<dbReference type="InParanoid" id="Q8T088"/>
<dbReference type="OMA" id="GIIKHWD"/>
<dbReference type="OrthoDB" id="2288928at2759"/>
<dbReference type="PhylomeDB" id="Q8T088"/>
<dbReference type="BioGRID-ORCS" id="41419">
    <property type="hits" value="0 hits in 1 CRISPR screen"/>
</dbReference>
<dbReference type="GenomeRNAi" id="41419"/>
<dbReference type="PRO" id="PR:Q8T088"/>
<dbReference type="Proteomes" id="UP000000803">
    <property type="component" value="Chromosome 3R"/>
</dbReference>
<dbReference type="Bgee" id="FBgn0037943">
    <property type="expression patterns" value="Expressed in T neuron T5c (Drosophila) in embryonic/larval optic lobe (Drosophila) and 123 other cell types or tissues"/>
</dbReference>
<dbReference type="GO" id="GO:0050829">
    <property type="term" value="P:defense response to Gram-negative bacterium"/>
    <property type="evidence" value="ECO:0000315"/>
    <property type="project" value="FlyBase"/>
</dbReference>
<dbReference type="FunFam" id="2.130.10.10:FF:001280">
    <property type="entry name" value="WD repeat-containing protein 55 homolog"/>
    <property type="match status" value="1"/>
</dbReference>
<dbReference type="FunFam" id="2.130.10.10:FF:001796">
    <property type="entry name" value="WD repeat-containing protein 55 homolog"/>
    <property type="match status" value="1"/>
</dbReference>
<dbReference type="Gene3D" id="2.130.10.10">
    <property type="entry name" value="YVTN repeat-like/Quinoprotein amine dehydrogenase"/>
    <property type="match status" value="2"/>
</dbReference>
<dbReference type="InterPro" id="IPR015943">
    <property type="entry name" value="WD40/YVTN_repeat-like_dom_sf"/>
</dbReference>
<dbReference type="InterPro" id="IPR019775">
    <property type="entry name" value="WD40_repeat_CS"/>
</dbReference>
<dbReference type="InterPro" id="IPR036322">
    <property type="entry name" value="WD40_repeat_dom_sf"/>
</dbReference>
<dbReference type="InterPro" id="IPR001680">
    <property type="entry name" value="WD40_rpt"/>
</dbReference>
<dbReference type="InterPro" id="IPR050505">
    <property type="entry name" value="WDR55_POC1"/>
</dbReference>
<dbReference type="PANTHER" id="PTHR44019">
    <property type="entry name" value="WD REPEAT-CONTAINING PROTEIN 55"/>
    <property type="match status" value="1"/>
</dbReference>
<dbReference type="PANTHER" id="PTHR44019:SF20">
    <property type="entry name" value="WD REPEAT-CONTAINING PROTEIN 55"/>
    <property type="match status" value="1"/>
</dbReference>
<dbReference type="Pfam" id="PF24796">
    <property type="entry name" value="WDR55"/>
    <property type="match status" value="1"/>
</dbReference>
<dbReference type="SMART" id="SM00320">
    <property type="entry name" value="WD40"/>
    <property type="match status" value="5"/>
</dbReference>
<dbReference type="SUPFAM" id="SSF50978">
    <property type="entry name" value="WD40 repeat-like"/>
    <property type="match status" value="1"/>
</dbReference>
<dbReference type="PROSITE" id="PS00678">
    <property type="entry name" value="WD_REPEATS_1"/>
    <property type="match status" value="1"/>
</dbReference>
<dbReference type="PROSITE" id="PS50082">
    <property type="entry name" value="WD_REPEATS_2"/>
    <property type="match status" value="3"/>
</dbReference>
<dbReference type="PROSITE" id="PS50294">
    <property type="entry name" value="WD_REPEATS_REGION"/>
    <property type="match status" value="1"/>
</dbReference>
<protein>
    <recommendedName>
        <fullName>WD repeat-containing protein 55 homolog</fullName>
    </recommendedName>
</protein>
<organism>
    <name type="scientific">Drosophila melanogaster</name>
    <name type="common">Fruit fly</name>
    <dbReference type="NCBI Taxonomy" id="7227"/>
    <lineage>
        <taxon>Eukaryota</taxon>
        <taxon>Metazoa</taxon>
        <taxon>Ecdysozoa</taxon>
        <taxon>Arthropoda</taxon>
        <taxon>Hexapoda</taxon>
        <taxon>Insecta</taxon>
        <taxon>Pterygota</taxon>
        <taxon>Neoptera</taxon>
        <taxon>Endopterygota</taxon>
        <taxon>Diptera</taxon>
        <taxon>Brachycera</taxon>
        <taxon>Muscomorpha</taxon>
        <taxon>Ephydroidea</taxon>
        <taxon>Drosophilidae</taxon>
        <taxon>Drosophila</taxon>
        <taxon>Sophophora</taxon>
    </lineage>
</organism>
<evidence type="ECO:0000256" key="1">
    <source>
        <dbReference type="SAM" id="MobiDB-lite"/>
    </source>
</evidence>
<evidence type="ECO:0000305" key="2"/>
<name>WDR55_DROME</name>
<keyword id="KW-1185">Reference proteome</keyword>
<keyword id="KW-0677">Repeat</keyword>
<keyword id="KW-0853">WD repeat</keyword>
<feature type="chain" id="PRO_0000373961" description="WD repeat-containing protein 55 homolog">
    <location>
        <begin position="1"/>
        <end position="498"/>
    </location>
</feature>
<feature type="repeat" description="WD 1">
    <location>
        <begin position="154"/>
        <end position="193"/>
    </location>
</feature>
<feature type="repeat" description="WD 2">
    <location>
        <begin position="198"/>
        <end position="237"/>
    </location>
</feature>
<feature type="repeat" description="WD 3">
    <location>
        <begin position="241"/>
        <end position="279"/>
    </location>
</feature>
<feature type="repeat" description="WD 4">
    <location>
        <begin position="282"/>
        <end position="321"/>
    </location>
</feature>
<feature type="repeat" description="WD 5">
    <location>
        <begin position="324"/>
        <end position="363"/>
    </location>
</feature>
<feature type="repeat" description="WD 6">
    <location>
        <begin position="408"/>
        <end position="447"/>
    </location>
</feature>
<feature type="region of interest" description="Disordered" evidence="1">
    <location>
        <begin position="1"/>
        <end position="131"/>
    </location>
</feature>
<feature type="region of interest" description="Disordered" evidence="1">
    <location>
        <begin position="478"/>
        <end position="498"/>
    </location>
</feature>
<feature type="compositionally biased region" description="Acidic residues" evidence="1">
    <location>
        <begin position="12"/>
        <end position="23"/>
    </location>
</feature>
<feature type="compositionally biased region" description="Acidic residues" evidence="1">
    <location>
        <begin position="31"/>
        <end position="48"/>
    </location>
</feature>
<feature type="compositionally biased region" description="Low complexity" evidence="1">
    <location>
        <begin position="67"/>
        <end position="82"/>
    </location>
</feature>
<feature type="compositionally biased region" description="Low complexity" evidence="1">
    <location>
        <begin position="93"/>
        <end position="103"/>
    </location>
</feature>
<proteinExistence type="evidence at transcript level"/>
<comment type="similarity">
    <text evidence="2">Belongs to the WD repeat WDR55 family.</text>
</comment>
<reference key="1">
    <citation type="journal article" date="2000" name="Science">
        <title>The genome sequence of Drosophila melanogaster.</title>
        <authorList>
            <person name="Adams M.D."/>
            <person name="Celniker S.E."/>
            <person name="Holt R.A."/>
            <person name="Evans C.A."/>
            <person name="Gocayne J.D."/>
            <person name="Amanatides P.G."/>
            <person name="Scherer S.E."/>
            <person name="Li P.W."/>
            <person name="Hoskins R.A."/>
            <person name="Galle R.F."/>
            <person name="George R.A."/>
            <person name="Lewis S.E."/>
            <person name="Richards S."/>
            <person name="Ashburner M."/>
            <person name="Henderson S.N."/>
            <person name="Sutton G.G."/>
            <person name="Wortman J.R."/>
            <person name="Yandell M.D."/>
            <person name="Zhang Q."/>
            <person name="Chen L.X."/>
            <person name="Brandon R.C."/>
            <person name="Rogers Y.-H.C."/>
            <person name="Blazej R.G."/>
            <person name="Champe M."/>
            <person name="Pfeiffer B.D."/>
            <person name="Wan K.H."/>
            <person name="Doyle C."/>
            <person name="Baxter E.G."/>
            <person name="Helt G."/>
            <person name="Nelson C.R."/>
            <person name="Miklos G.L.G."/>
            <person name="Abril J.F."/>
            <person name="Agbayani A."/>
            <person name="An H.-J."/>
            <person name="Andrews-Pfannkoch C."/>
            <person name="Baldwin D."/>
            <person name="Ballew R.M."/>
            <person name="Basu A."/>
            <person name="Baxendale J."/>
            <person name="Bayraktaroglu L."/>
            <person name="Beasley E.M."/>
            <person name="Beeson K.Y."/>
            <person name="Benos P.V."/>
            <person name="Berman B.P."/>
            <person name="Bhandari D."/>
            <person name="Bolshakov S."/>
            <person name="Borkova D."/>
            <person name="Botchan M.R."/>
            <person name="Bouck J."/>
            <person name="Brokstein P."/>
            <person name="Brottier P."/>
            <person name="Burtis K.C."/>
            <person name="Busam D.A."/>
            <person name="Butler H."/>
            <person name="Cadieu E."/>
            <person name="Center A."/>
            <person name="Chandra I."/>
            <person name="Cherry J.M."/>
            <person name="Cawley S."/>
            <person name="Dahlke C."/>
            <person name="Davenport L.B."/>
            <person name="Davies P."/>
            <person name="de Pablos B."/>
            <person name="Delcher A."/>
            <person name="Deng Z."/>
            <person name="Mays A.D."/>
            <person name="Dew I."/>
            <person name="Dietz S.M."/>
            <person name="Dodson K."/>
            <person name="Doup L.E."/>
            <person name="Downes M."/>
            <person name="Dugan-Rocha S."/>
            <person name="Dunkov B.C."/>
            <person name="Dunn P."/>
            <person name="Durbin K.J."/>
            <person name="Evangelista C.C."/>
            <person name="Ferraz C."/>
            <person name="Ferriera S."/>
            <person name="Fleischmann W."/>
            <person name="Fosler C."/>
            <person name="Gabrielian A.E."/>
            <person name="Garg N.S."/>
            <person name="Gelbart W.M."/>
            <person name="Glasser K."/>
            <person name="Glodek A."/>
            <person name="Gong F."/>
            <person name="Gorrell J.H."/>
            <person name="Gu Z."/>
            <person name="Guan P."/>
            <person name="Harris M."/>
            <person name="Harris N.L."/>
            <person name="Harvey D.A."/>
            <person name="Heiman T.J."/>
            <person name="Hernandez J.R."/>
            <person name="Houck J."/>
            <person name="Hostin D."/>
            <person name="Houston K.A."/>
            <person name="Howland T.J."/>
            <person name="Wei M.-H."/>
            <person name="Ibegwam C."/>
            <person name="Jalali M."/>
            <person name="Kalush F."/>
            <person name="Karpen G.H."/>
            <person name="Ke Z."/>
            <person name="Kennison J.A."/>
            <person name="Ketchum K.A."/>
            <person name="Kimmel B.E."/>
            <person name="Kodira C.D."/>
            <person name="Kraft C.L."/>
            <person name="Kravitz S."/>
            <person name="Kulp D."/>
            <person name="Lai Z."/>
            <person name="Lasko P."/>
            <person name="Lei Y."/>
            <person name="Levitsky A.A."/>
            <person name="Li J.H."/>
            <person name="Li Z."/>
            <person name="Liang Y."/>
            <person name="Lin X."/>
            <person name="Liu X."/>
            <person name="Mattei B."/>
            <person name="McIntosh T.C."/>
            <person name="McLeod M.P."/>
            <person name="McPherson D."/>
            <person name="Merkulov G."/>
            <person name="Milshina N.V."/>
            <person name="Mobarry C."/>
            <person name="Morris J."/>
            <person name="Moshrefi A."/>
            <person name="Mount S.M."/>
            <person name="Moy M."/>
            <person name="Murphy B."/>
            <person name="Murphy L."/>
            <person name="Muzny D.M."/>
            <person name="Nelson D.L."/>
            <person name="Nelson D.R."/>
            <person name="Nelson K.A."/>
            <person name="Nixon K."/>
            <person name="Nusskern D.R."/>
            <person name="Pacleb J.M."/>
            <person name="Palazzolo M."/>
            <person name="Pittman G.S."/>
            <person name="Pan S."/>
            <person name="Pollard J."/>
            <person name="Puri V."/>
            <person name="Reese M.G."/>
            <person name="Reinert K."/>
            <person name="Remington K."/>
            <person name="Saunders R.D.C."/>
            <person name="Scheeler F."/>
            <person name="Shen H."/>
            <person name="Shue B.C."/>
            <person name="Siden-Kiamos I."/>
            <person name="Simpson M."/>
            <person name="Skupski M.P."/>
            <person name="Smith T.J."/>
            <person name="Spier E."/>
            <person name="Spradling A.C."/>
            <person name="Stapleton M."/>
            <person name="Strong R."/>
            <person name="Sun E."/>
            <person name="Svirskas R."/>
            <person name="Tector C."/>
            <person name="Turner R."/>
            <person name="Venter E."/>
            <person name="Wang A.H."/>
            <person name="Wang X."/>
            <person name="Wang Z.-Y."/>
            <person name="Wassarman D.A."/>
            <person name="Weinstock G.M."/>
            <person name="Weissenbach J."/>
            <person name="Williams S.M."/>
            <person name="Woodage T."/>
            <person name="Worley K.C."/>
            <person name="Wu D."/>
            <person name="Yang S."/>
            <person name="Yao Q.A."/>
            <person name="Ye J."/>
            <person name="Yeh R.-F."/>
            <person name="Zaveri J.S."/>
            <person name="Zhan M."/>
            <person name="Zhang G."/>
            <person name="Zhao Q."/>
            <person name="Zheng L."/>
            <person name="Zheng X.H."/>
            <person name="Zhong F.N."/>
            <person name="Zhong W."/>
            <person name="Zhou X."/>
            <person name="Zhu S.C."/>
            <person name="Zhu X."/>
            <person name="Smith H.O."/>
            <person name="Gibbs R.A."/>
            <person name="Myers E.W."/>
            <person name="Rubin G.M."/>
            <person name="Venter J.C."/>
        </authorList>
    </citation>
    <scope>NUCLEOTIDE SEQUENCE [LARGE SCALE GENOMIC DNA]</scope>
    <source>
        <strain>Berkeley</strain>
    </source>
</reference>
<reference key="2">
    <citation type="journal article" date="2002" name="Genome Biol.">
        <title>Annotation of the Drosophila melanogaster euchromatic genome: a systematic review.</title>
        <authorList>
            <person name="Misra S."/>
            <person name="Crosby M.A."/>
            <person name="Mungall C.J."/>
            <person name="Matthews B.B."/>
            <person name="Campbell K.S."/>
            <person name="Hradecky P."/>
            <person name="Huang Y."/>
            <person name="Kaminker J.S."/>
            <person name="Millburn G.H."/>
            <person name="Prochnik S.E."/>
            <person name="Smith C.D."/>
            <person name="Tupy J.L."/>
            <person name="Whitfield E.J."/>
            <person name="Bayraktaroglu L."/>
            <person name="Berman B.P."/>
            <person name="Bettencourt B.R."/>
            <person name="Celniker S.E."/>
            <person name="de Grey A.D.N.J."/>
            <person name="Drysdale R.A."/>
            <person name="Harris N.L."/>
            <person name="Richter J."/>
            <person name="Russo S."/>
            <person name="Schroeder A.J."/>
            <person name="Shu S.Q."/>
            <person name="Stapleton M."/>
            <person name="Yamada C."/>
            <person name="Ashburner M."/>
            <person name="Gelbart W.M."/>
            <person name="Rubin G.M."/>
            <person name="Lewis S.E."/>
        </authorList>
    </citation>
    <scope>GENOME REANNOTATION</scope>
    <source>
        <strain>Berkeley</strain>
    </source>
</reference>
<reference key="3">
    <citation type="journal article" date="2002" name="Genome Biol.">
        <title>A Drosophila full-length cDNA resource.</title>
        <authorList>
            <person name="Stapleton M."/>
            <person name="Carlson J.W."/>
            <person name="Brokstein P."/>
            <person name="Yu C."/>
            <person name="Champe M."/>
            <person name="George R.A."/>
            <person name="Guarin H."/>
            <person name="Kronmiller B."/>
            <person name="Pacleb J.M."/>
            <person name="Park S."/>
            <person name="Wan K.H."/>
            <person name="Rubin G.M."/>
            <person name="Celniker S.E."/>
        </authorList>
    </citation>
    <scope>NUCLEOTIDE SEQUENCE [LARGE SCALE MRNA]</scope>
    <source>
        <strain>Berkeley</strain>
        <tissue>Embryo</tissue>
    </source>
</reference>
<accession>Q8T088</accession>
<accession>Q9VGI7</accession>
<gene>
    <name type="ORF">CG14722</name>
</gene>